<sequence>MAADGDWQDFYEFQEPAGSVQEQENCNASPEAGAGAHAGGDSFPALASSLEEKLSLCFRPTSEAEPPRAAVRPITECSLLQGDEIWNALTDNYGNVMPVDWKSSHTRTLHLLTLNLSEKGMNDGLLFDASDEEELREQLDMHSIIVSCVNEEPLFTADQVIEEIEEMMQESPDPEDDETPTQSDRLSMLSQEIQTLKRSSMSSYEERVKRLSVSELNELLEEIEAAIKQYSEELVQQLALRDELEFEKEVENSFISALIEVQNKQKEHKETAKKKKKLKSGSSQNGRSERSHMPGTYLTTVIPYEKKSGPPSVEDLQILTKILHAMKEDSEKVPSLLTDYILKVLCPT</sequence>
<reference key="1">
    <citation type="submission" date="2003-09" db="EMBL/GenBank/DDBJ databases">
        <title>Fez2 expression in mouse testis.</title>
        <authorList>
            <person name="Lopez-Casas P.P."/>
            <person name="Del Mazo J."/>
        </authorList>
    </citation>
    <scope>NUCLEOTIDE SEQUENCE [MRNA]</scope>
    <source>
        <strain>CD-1</strain>
        <tissue>Testis</tissue>
    </source>
</reference>
<reference key="2">
    <citation type="journal article" date="2004" name="Genome Res.">
        <title>The status, quality, and expansion of the NIH full-length cDNA project: the Mammalian Gene Collection (MGC).</title>
        <authorList>
            <consortium name="The MGC Project Team"/>
        </authorList>
    </citation>
    <scope>NUCLEOTIDE SEQUENCE [LARGE SCALE MRNA]</scope>
    <source>
        <tissue>Olfactory epithelium</tissue>
    </source>
</reference>
<comment type="function">
    <text evidence="1">Involved in axonal outgrowth and fasciculation.</text>
</comment>
<comment type="subunit">
    <text evidence="1">Homodimer; disulfide-linked. May form heterodimers with FEZ1. Interacts with synaptotagmin (By similarity).</text>
</comment>
<comment type="similarity">
    <text evidence="5">Belongs to the zygin family.</text>
</comment>
<name>FEZ2_MOUSE</name>
<evidence type="ECO:0000250" key="1"/>
<evidence type="ECO:0000250" key="2">
    <source>
        <dbReference type="UniProtKB" id="Q9UHY8"/>
    </source>
</evidence>
<evidence type="ECO:0000255" key="3"/>
<evidence type="ECO:0000256" key="4">
    <source>
        <dbReference type="SAM" id="MobiDB-lite"/>
    </source>
</evidence>
<evidence type="ECO:0000305" key="5"/>
<proteinExistence type="evidence at transcript level"/>
<feature type="chain" id="PRO_0000189529" description="Fasciculation and elongation protein zeta-2">
    <location>
        <begin position="1"/>
        <end position="348"/>
    </location>
</feature>
<feature type="region of interest" description="Disordered" evidence="4">
    <location>
        <begin position="11"/>
        <end position="40"/>
    </location>
</feature>
<feature type="region of interest" description="Disordered" evidence="4">
    <location>
        <begin position="265"/>
        <end position="296"/>
    </location>
</feature>
<feature type="coiled-coil region" evidence="3">
    <location>
        <begin position="206"/>
        <end position="280"/>
    </location>
</feature>
<feature type="modified residue" description="Phosphoserine" evidence="2">
    <location>
        <position position="130"/>
    </location>
</feature>
<feature type="modified residue" description="Phosphoserine" evidence="2">
    <location>
        <position position="171"/>
    </location>
</feature>
<feature type="modified residue" description="Phosphoserine" evidence="2">
    <location>
        <position position="190"/>
    </location>
</feature>
<feature type="disulfide bond" description="Interchain" evidence="1">
    <location>
        <position position="148"/>
    </location>
</feature>
<organism>
    <name type="scientific">Mus musculus</name>
    <name type="common">Mouse</name>
    <dbReference type="NCBI Taxonomy" id="10090"/>
    <lineage>
        <taxon>Eukaryota</taxon>
        <taxon>Metazoa</taxon>
        <taxon>Chordata</taxon>
        <taxon>Craniata</taxon>
        <taxon>Vertebrata</taxon>
        <taxon>Euteleostomi</taxon>
        <taxon>Mammalia</taxon>
        <taxon>Eutheria</taxon>
        <taxon>Euarchontoglires</taxon>
        <taxon>Glires</taxon>
        <taxon>Rodentia</taxon>
        <taxon>Myomorpha</taxon>
        <taxon>Muroidea</taxon>
        <taxon>Muridae</taxon>
        <taxon>Murinae</taxon>
        <taxon>Mus</taxon>
        <taxon>Mus</taxon>
    </lineage>
</organism>
<protein>
    <recommendedName>
        <fullName>Fasciculation and elongation protein zeta-2</fullName>
    </recommendedName>
    <alternativeName>
        <fullName>Zygin II</fullName>
    </alternativeName>
    <alternativeName>
        <fullName>Zygin-2</fullName>
    </alternativeName>
</protein>
<keyword id="KW-0175">Coiled coil</keyword>
<keyword id="KW-1015">Disulfide bond</keyword>
<keyword id="KW-0597">Phosphoprotein</keyword>
<keyword id="KW-1185">Reference proteome</keyword>
<accession>Q6TYB5</accession>
<dbReference type="EMBL" id="AY382580">
    <property type="protein sequence ID" value="AAR36860.1"/>
    <property type="molecule type" value="mRNA"/>
</dbReference>
<dbReference type="EMBL" id="BC096619">
    <property type="protein sequence ID" value="AAH96619.1"/>
    <property type="molecule type" value="mRNA"/>
</dbReference>
<dbReference type="CCDS" id="CCDS28977.1"/>
<dbReference type="RefSeq" id="NP_955519.1">
    <property type="nucleotide sequence ID" value="NM_199448.3"/>
</dbReference>
<dbReference type="SMR" id="Q6TYB5"/>
<dbReference type="BioGRID" id="230350">
    <property type="interactions" value="27"/>
</dbReference>
<dbReference type="FunCoup" id="Q6TYB5">
    <property type="interactions" value="870"/>
</dbReference>
<dbReference type="IntAct" id="Q6TYB5">
    <property type="interactions" value="1"/>
</dbReference>
<dbReference type="STRING" id="10090.ENSMUSP00000108106"/>
<dbReference type="iPTMnet" id="Q6TYB5"/>
<dbReference type="PhosphoSitePlus" id="Q6TYB5"/>
<dbReference type="jPOST" id="Q6TYB5"/>
<dbReference type="PaxDb" id="10090-ENSMUSP00000068987"/>
<dbReference type="ProteomicsDB" id="272993"/>
<dbReference type="Pumba" id="Q6TYB5"/>
<dbReference type="Antibodypedia" id="29294">
    <property type="antibodies" value="168 antibodies from 27 providers"/>
</dbReference>
<dbReference type="DNASU" id="225020"/>
<dbReference type="Ensembl" id="ENSMUST00000070039.14">
    <property type="protein sequence ID" value="ENSMUSP00000068987.8"/>
    <property type="gene ID" value="ENSMUSG00000056121.17"/>
</dbReference>
<dbReference type="GeneID" id="225020"/>
<dbReference type="KEGG" id="mmu:225020"/>
<dbReference type="UCSC" id="uc008dov.2">
    <property type="organism name" value="mouse"/>
</dbReference>
<dbReference type="AGR" id="MGI:2675856"/>
<dbReference type="CTD" id="9637"/>
<dbReference type="MGI" id="MGI:2675856">
    <property type="gene designation" value="Fez2"/>
</dbReference>
<dbReference type="VEuPathDB" id="HostDB:ENSMUSG00000056121"/>
<dbReference type="eggNOG" id="KOG3919">
    <property type="taxonomic scope" value="Eukaryota"/>
</dbReference>
<dbReference type="GeneTree" id="ENSGT00390000017627"/>
<dbReference type="InParanoid" id="Q6TYB5"/>
<dbReference type="OrthoDB" id="7959977at2759"/>
<dbReference type="TreeFam" id="TF313128"/>
<dbReference type="BioGRID-ORCS" id="225020">
    <property type="hits" value="0 hits in 76 CRISPR screens"/>
</dbReference>
<dbReference type="PRO" id="PR:Q6TYB5"/>
<dbReference type="Proteomes" id="UP000000589">
    <property type="component" value="Chromosome 17"/>
</dbReference>
<dbReference type="RNAct" id="Q6TYB5">
    <property type="molecule type" value="protein"/>
</dbReference>
<dbReference type="Bgee" id="ENSMUSG00000056121">
    <property type="expression patterns" value="Expressed in epithelium of lens and 261 other cell types or tissues"/>
</dbReference>
<dbReference type="ExpressionAtlas" id="Q6TYB5">
    <property type="expression patterns" value="baseline and differential"/>
</dbReference>
<dbReference type="GO" id="GO:1902902">
    <property type="term" value="P:negative regulation of autophagosome assembly"/>
    <property type="evidence" value="ECO:0000250"/>
    <property type="project" value="GO_Central"/>
</dbReference>
<dbReference type="InterPro" id="IPR011680">
    <property type="entry name" value="FEZ"/>
</dbReference>
<dbReference type="PANTHER" id="PTHR12394:SF11">
    <property type="entry name" value="FASCICULATION AND ELONGATION PROTEIN ZETA-2"/>
    <property type="match status" value="1"/>
</dbReference>
<dbReference type="PANTHER" id="PTHR12394">
    <property type="entry name" value="ZYGIN"/>
    <property type="match status" value="1"/>
</dbReference>
<dbReference type="Pfam" id="PF07763">
    <property type="entry name" value="FEZ"/>
    <property type="match status" value="1"/>
</dbReference>
<gene>
    <name type="primary">Fez2</name>
</gene>